<protein>
    <recommendedName>
        <fullName>Ribosome biogenesis protein BRX1 homolog</fullName>
    </recommendedName>
    <alternativeName>
        <fullName>Brix domain-containing protein 2</fullName>
    </alternativeName>
</protein>
<keyword id="KW-0007">Acetylation</keyword>
<keyword id="KW-1017">Isopeptide bond</keyword>
<keyword id="KW-0539">Nucleus</keyword>
<keyword id="KW-0597">Phosphoprotein</keyword>
<keyword id="KW-1185">Reference proteome</keyword>
<keyword id="KW-0690">Ribosome biogenesis</keyword>
<keyword id="KW-0832">Ubl conjugation</keyword>
<evidence type="ECO:0000250" key="1"/>
<evidence type="ECO:0000250" key="2">
    <source>
        <dbReference type="UniProtKB" id="Q8TDN6"/>
    </source>
</evidence>
<evidence type="ECO:0000255" key="3">
    <source>
        <dbReference type="PROSITE-ProRule" id="PRU00034"/>
    </source>
</evidence>
<evidence type="ECO:0000256" key="4">
    <source>
        <dbReference type="SAM" id="MobiDB-lite"/>
    </source>
</evidence>
<evidence type="ECO:0000305" key="5"/>
<sequence>MAATKRKRRGGLEVQAKKPKRSSKDAGQPAKQADVAKEAEEENRDRIPGPVCKGKWKNKERILIFSSRGINFRTRHLMQDLRMLMPHSKADTKMDRKDKLFVINEVCEMKNCNKCIYFEAKKKQDLYMWLSNSPHGPSAKFLVQNIHTLAELKMTGNCLKGSRPLLSFDPAFDDLPHYALLKEFLIQIFSTPRYHPKSQPFVDHVFTFTILDNRIWFRNFQIIEEDAALVEIGPRFVLNLIKIFQGSFGGPTLYENPHYQSPNMHRRVIRSITAAKYRERQQVKDVQKLRKKEPKTILPHDPTADVFVIPAEEKPVEIQWVKPEPKVDLKARKRRIYKRHRKLQQKMSRGSAK</sequence>
<proteinExistence type="evidence at protein level"/>
<accession>Q9DCA5</accession>
<accession>Q3THD3</accession>
<accession>Q91YS6</accession>
<organism>
    <name type="scientific">Mus musculus</name>
    <name type="common">Mouse</name>
    <dbReference type="NCBI Taxonomy" id="10090"/>
    <lineage>
        <taxon>Eukaryota</taxon>
        <taxon>Metazoa</taxon>
        <taxon>Chordata</taxon>
        <taxon>Craniata</taxon>
        <taxon>Vertebrata</taxon>
        <taxon>Euteleostomi</taxon>
        <taxon>Mammalia</taxon>
        <taxon>Eutheria</taxon>
        <taxon>Euarchontoglires</taxon>
        <taxon>Glires</taxon>
        <taxon>Rodentia</taxon>
        <taxon>Myomorpha</taxon>
        <taxon>Muroidea</taxon>
        <taxon>Muridae</taxon>
        <taxon>Murinae</taxon>
        <taxon>Mus</taxon>
        <taxon>Mus</taxon>
    </lineage>
</organism>
<dbReference type="EMBL" id="AK002985">
    <property type="protein sequence ID" value="BAB22497.1"/>
    <property type="status" value="ALT_INIT"/>
    <property type="molecule type" value="mRNA"/>
</dbReference>
<dbReference type="EMBL" id="AK168325">
    <property type="protein sequence ID" value="BAE40264.1"/>
    <property type="molecule type" value="mRNA"/>
</dbReference>
<dbReference type="EMBL" id="BC014832">
    <property type="protein sequence ID" value="AAH14832.1"/>
    <property type="status" value="ALT_INIT"/>
    <property type="molecule type" value="mRNA"/>
</dbReference>
<dbReference type="CCDS" id="CCDS37042.1"/>
<dbReference type="RefSeq" id="NP_080672.3">
    <property type="nucleotide sequence ID" value="NM_026396.3"/>
</dbReference>
<dbReference type="SMR" id="Q9DCA5"/>
<dbReference type="BioGRID" id="212465">
    <property type="interactions" value="5"/>
</dbReference>
<dbReference type="FunCoup" id="Q9DCA5">
    <property type="interactions" value="2737"/>
</dbReference>
<dbReference type="IntAct" id="Q9DCA5">
    <property type="interactions" value="1"/>
</dbReference>
<dbReference type="STRING" id="10090.ENSMUSP00000022855"/>
<dbReference type="iPTMnet" id="Q9DCA5"/>
<dbReference type="PhosphoSitePlus" id="Q9DCA5"/>
<dbReference type="PaxDb" id="10090-ENSMUSP00000022855"/>
<dbReference type="PeptideAtlas" id="Q9DCA5"/>
<dbReference type="ProteomicsDB" id="265245"/>
<dbReference type="Pumba" id="Q9DCA5"/>
<dbReference type="Antibodypedia" id="10048">
    <property type="antibodies" value="202 antibodies from 25 providers"/>
</dbReference>
<dbReference type="DNASU" id="67832"/>
<dbReference type="Ensembl" id="ENSMUST00000022855.12">
    <property type="protein sequence ID" value="ENSMUSP00000022855.6"/>
    <property type="gene ID" value="ENSMUSG00000022247.13"/>
</dbReference>
<dbReference type="GeneID" id="67832"/>
<dbReference type="KEGG" id="mmu:67832"/>
<dbReference type="UCSC" id="uc007vgg.1">
    <property type="organism name" value="mouse"/>
</dbReference>
<dbReference type="AGR" id="MGI:1915082"/>
<dbReference type="CTD" id="55299"/>
<dbReference type="MGI" id="MGI:1915082">
    <property type="gene designation" value="Brix1"/>
</dbReference>
<dbReference type="VEuPathDB" id="HostDB:ENSMUSG00000022247"/>
<dbReference type="eggNOG" id="KOG2971">
    <property type="taxonomic scope" value="Eukaryota"/>
</dbReference>
<dbReference type="GeneTree" id="ENSGT00390000014467"/>
<dbReference type="HOGENOM" id="CLU_048373_2_0_1"/>
<dbReference type="InParanoid" id="Q9DCA5"/>
<dbReference type="OMA" id="YRHRHLM"/>
<dbReference type="OrthoDB" id="1638493at2759"/>
<dbReference type="PhylomeDB" id="Q9DCA5"/>
<dbReference type="TreeFam" id="TF105766"/>
<dbReference type="BioGRID-ORCS" id="67832">
    <property type="hits" value="27 hits in 80 CRISPR screens"/>
</dbReference>
<dbReference type="ChiTaRS" id="Brix1">
    <property type="organism name" value="mouse"/>
</dbReference>
<dbReference type="PRO" id="PR:Q9DCA5"/>
<dbReference type="Proteomes" id="UP000000589">
    <property type="component" value="Chromosome 15"/>
</dbReference>
<dbReference type="RNAct" id="Q9DCA5">
    <property type="molecule type" value="protein"/>
</dbReference>
<dbReference type="Bgee" id="ENSMUSG00000022247">
    <property type="expression patterns" value="Expressed in animal zygote and 268 other cell types or tissues"/>
</dbReference>
<dbReference type="ExpressionAtlas" id="Q9DCA5">
    <property type="expression patterns" value="baseline and differential"/>
</dbReference>
<dbReference type="GO" id="GO:0005694">
    <property type="term" value="C:chromosome"/>
    <property type="evidence" value="ECO:0007669"/>
    <property type="project" value="Ensembl"/>
</dbReference>
<dbReference type="GO" id="GO:0005730">
    <property type="term" value="C:nucleolus"/>
    <property type="evidence" value="ECO:0007669"/>
    <property type="project" value="UniProtKB-SubCell"/>
</dbReference>
<dbReference type="GO" id="GO:0019843">
    <property type="term" value="F:rRNA binding"/>
    <property type="evidence" value="ECO:0007669"/>
    <property type="project" value="InterPro"/>
</dbReference>
<dbReference type="GO" id="GO:0006364">
    <property type="term" value="P:rRNA processing"/>
    <property type="evidence" value="ECO:0007669"/>
    <property type="project" value="InterPro"/>
</dbReference>
<dbReference type="FunFam" id="3.40.50.10480:FF:000003">
    <property type="entry name" value="Ribosome biogenesis protein BRX1"/>
    <property type="match status" value="1"/>
</dbReference>
<dbReference type="Gene3D" id="3.40.50.10480">
    <property type="entry name" value="Probable brix-domain ribosomal biogenesis protein"/>
    <property type="match status" value="1"/>
</dbReference>
<dbReference type="InterPro" id="IPR007109">
    <property type="entry name" value="Brix"/>
</dbReference>
<dbReference type="InterPro" id="IPR026532">
    <property type="entry name" value="BRX1"/>
</dbReference>
<dbReference type="PANTHER" id="PTHR13634">
    <property type="entry name" value="RIBOSOME BIOGENESIS PROTEIN BRIX"/>
    <property type="match status" value="1"/>
</dbReference>
<dbReference type="PANTHER" id="PTHR13634:SF0">
    <property type="entry name" value="RIBOSOME BIOGENESIS PROTEIN BRX1 HOMOLOG"/>
    <property type="match status" value="1"/>
</dbReference>
<dbReference type="Pfam" id="PF04427">
    <property type="entry name" value="Brix"/>
    <property type="match status" value="1"/>
</dbReference>
<dbReference type="SMART" id="SM00879">
    <property type="entry name" value="Brix"/>
    <property type="match status" value="1"/>
</dbReference>
<dbReference type="SUPFAM" id="SSF52954">
    <property type="entry name" value="Class II aaRS ABD-related"/>
    <property type="match status" value="1"/>
</dbReference>
<dbReference type="PROSITE" id="PS50833">
    <property type="entry name" value="BRIX"/>
    <property type="match status" value="1"/>
</dbReference>
<comment type="function">
    <text evidence="1">Required for biogenesis of the 60S ribosomal subunit.</text>
</comment>
<comment type="subcellular location">
    <subcellularLocation>
        <location evidence="1">Nucleus</location>
        <location evidence="1">Nucleolus</location>
    </subcellularLocation>
</comment>
<comment type="similarity">
    <text evidence="5">Belongs to the BRX1 family.</text>
</comment>
<comment type="sequence caution" evidence="5">
    <conflict type="erroneous initiation">
        <sequence resource="EMBL-CDS" id="AAH14832"/>
    </conflict>
</comment>
<comment type="sequence caution" evidence="5">
    <conflict type="erroneous initiation">
        <sequence resource="EMBL-CDS" id="BAB22497"/>
    </conflict>
</comment>
<name>BRX1_MOUSE</name>
<reference key="1">
    <citation type="journal article" date="2005" name="Science">
        <title>The transcriptional landscape of the mammalian genome.</title>
        <authorList>
            <person name="Carninci P."/>
            <person name="Kasukawa T."/>
            <person name="Katayama S."/>
            <person name="Gough J."/>
            <person name="Frith M.C."/>
            <person name="Maeda N."/>
            <person name="Oyama R."/>
            <person name="Ravasi T."/>
            <person name="Lenhard B."/>
            <person name="Wells C."/>
            <person name="Kodzius R."/>
            <person name="Shimokawa K."/>
            <person name="Bajic V.B."/>
            <person name="Brenner S.E."/>
            <person name="Batalov S."/>
            <person name="Forrest A.R."/>
            <person name="Zavolan M."/>
            <person name="Davis M.J."/>
            <person name="Wilming L.G."/>
            <person name="Aidinis V."/>
            <person name="Allen J.E."/>
            <person name="Ambesi-Impiombato A."/>
            <person name="Apweiler R."/>
            <person name="Aturaliya R.N."/>
            <person name="Bailey T.L."/>
            <person name="Bansal M."/>
            <person name="Baxter L."/>
            <person name="Beisel K.W."/>
            <person name="Bersano T."/>
            <person name="Bono H."/>
            <person name="Chalk A.M."/>
            <person name="Chiu K.P."/>
            <person name="Choudhary V."/>
            <person name="Christoffels A."/>
            <person name="Clutterbuck D.R."/>
            <person name="Crowe M.L."/>
            <person name="Dalla E."/>
            <person name="Dalrymple B.P."/>
            <person name="de Bono B."/>
            <person name="Della Gatta G."/>
            <person name="di Bernardo D."/>
            <person name="Down T."/>
            <person name="Engstrom P."/>
            <person name="Fagiolini M."/>
            <person name="Faulkner G."/>
            <person name="Fletcher C.F."/>
            <person name="Fukushima T."/>
            <person name="Furuno M."/>
            <person name="Futaki S."/>
            <person name="Gariboldi M."/>
            <person name="Georgii-Hemming P."/>
            <person name="Gingeras T.R."/>
            <person name="Gojobori T."/>
            <person name="Green R.E."/>
            <person name="Gustincich S."/>
            <person name="Harbers M."/>
            <person name="Hayashi Y."/>
            <person name="Hensch T.K."/>
            <person name="Hirokawa N."/>
            <person name="Hill D."/>
            <person name="Huminiecki L."/>
            <person name="Iacono M."/>
            <person name="Ikeo K."/>
            <person name="Iwama A."/>
            <person name="Ishikawa T."/>
            <person name="Jakt M."/>
            <person name="Kanapin A."/>
            <person name="Katoh M."/>
            <person name="Kawasawa Y."/>
            <person name="Kelso J."/>
            <person name="Kitamura H."/>
            <person name="Kitano H."/>
            <person name="Kollias G."/>
            <person name="Krishnan S.P."/>
            <person name="Kruger A."/>
            <person name="Kummerfeld S.K."/>
            <person name="Kurochkin I.V."/>
            <person name="Lareau L.F."/>
            <person name="Lazarevic D."/>
            <person name="Lipovich L."/>
            <person name="Liu J."/>
            <person name="Liuni S."/>
            <person name="McWilliam S."/>
            <person name="Madan Babu M."/>
            <person name="Madera M."/>
            <person name="Marchionni L."/>
            <person name="Matsuda H."/>
            <person name="Matsuzawa S."/>
            <person name="Miki H."/>
            <person name="Mignone F."/>
            <person name="Miyake S."/>
            <person name="Morris K."/>
            <person name="Mottagui-Tabar S."/>
            <person name="Mulder N."/>
            <person name="Nakano N."/>
            <person name="Nakauchi H."/>
            <person name="Ng P."/>
            <person name="Nilsson R."/>
            <person name="Nishiguchi S."/>
            <person name="Nishikawa S."/>
            <person name="Nori F."/>
            <person name="Ohara O."/>
            <person name="Okazaki Y."/>
            <person name="Orlando V."/>
            <person name="Pang K.C."/>
            <person name="Pavan W.J."/>
            <person name="Pavesi G."/>
            <person name="Pesole G."/>
            <person name="Petrovsky N."/>
            <person name="Piazza S."/>
            <person name="Reed J."/>
            <person name="Reid J.F."/>
            <person name="Ring B.Z."/>
            <person name="Ringwald M."/>
            <person name="Rost B."/>
            <person name="Ruan Y."/>
            <person name="Salzberg S.L."/>
            <person name="Sandelin A."/>
            <person name="Schneider C."/>
            <person name="Schoenbach C."/>
            <person name="Sekiguchi K."/>
            <person name="Semple C.A."/>
            <person name="Seno S."/>
            <person name="Sessa L."/>
            <person name="Sheng Y."/>
            <person name="Shibata Y."/>
            <person name="Shimada H."/>
            <person name="Shimada K."/>
            <person name="Silva D."/>
            <person name="Sinclair B."/>
            <person name="Sperling S."/>
            <person name="Stupka E."/>
            <person name="Sugiura K."/>
            <person name="Sultana R."/>
            <person name="Takenaka Y."/>
            <person name="Taki K."/>
            <person name="Tammoja K."/>
            <person name="Tan S.L."/>
            <person name="Tang S."/>
            <person name="Taylor M.S."/>
            <person name="Tegner J."/>
            <person name="Teichmann S.A."/>
            <person name="Ueda H.R."/>
            <person name="van Nimwegen E."/>
            <person name="Verardo R."/>
            <person name="Wei C.L."/>
            <person name="Yagi K."/>
            <person name="Yamanishi H."/>
            <person name="Zabarovsky E."/>
            <person name="Zhu S."/>
            <person name="Zimmer A."/>
            <person name="Hide W."/>
            <person name="Bult C."/>
            <person name="Grimmond S.M."/>
            <person name="Teasdale R.D."/>
            <person name="Liu E.T."/>
            <person name="Brusic V."/>
            <person name="Quackenbush J."/>
            <person name="Wahlestedt C."/>
            <person name="Mattick J.S."/>
            <person name="Hume D.A."/>
            <person name="Kai C."/>
            <person name="Sasaki D."/>
            <person name="Tomaru Y."/>
            <person name="Fukuda S."/>
            <person name="Kanamori-Katayama M."/>
            <person name="Suzuki M."/>
            <person name="Aoki J."/>
            <person name="Arakawa T."/>
            <person name="Iida J."/>
            <person name="Imamura K."/>
            <person name="Itoh M."/>
            <person name="Kato T."/>
            <person name="Kawaji H."/>
            <person name="Kawagashira N."/>
            <person name="Kawashima T."/>
            <person name="Kojima M."/>
            <person name="Kondo S."/>
            <person name="Konno H."/>
            <person name="Nakano K."/>
            <person name="Ninomiya N."/>
            <person name="Nishio T."/>
            <person name="Okada M."/>
            <person name="Plessy C."/>
            <person name="Shibata K."/>
            <person name="Shiraki T."/>
            <person name="Suzuki S."/>
            <person name="Tagami M."/>
            <person name="Waki K."/>
            <person name="Watahiki A."/>
            <person name="Okamura-Oho Y."/>
            <person name="Suzuki H."/>
            <person name="Kawai J."/>
            <person name="Hayashizaki Y."/>
        </authorList>
    </citation>
    <scope>NUCLEOTIDE SEQUENCE [LARGE SCALE MRNA]</scope>
    <source>
        <strain>C57BL/6J</strain>
        <strain>DBA/2J</strain>
        <tissue>Brain</tissue>
    </source>
</reference>
<reference key="2">
    <citation type="journal article" date="2004" name="Genome Res.">
        <title>The status, quality, and expansion of the NIH full-length cDNA project: the Mammalian Gene Collection (MGC).</title>
        <authorList>
            <consortium name="The MGC Project Team"/>
        </authorList>
    </citation>
    <scope>NUCLEOTIDE SEQUENCE [LARGE SCALE MRNA]</scope>
</reference>
<reference key="3">
    <citation type="journal article" date="2010" name="Cell">
        <title>A tissue-specific atlas of mouse protein phosphorylation and expression.</title>
        <authorList>
            <person name="Huttlin E.L."/>
            <person name="Jedrychowski M.P."/>
            <person name="Elias J.E."/>
            <person name="Goswami T."/>
            <person name="Rad R."/>
            <person name="Beausoleil S.A."/>
            <person name="Villen J."/>
            <person name="Haas W."/>
            <person name="Sowa M.E."/>
            <person name="Gygi S.P."/>
        </authorList>
    </citation>
    <scope>IDENTIFICATION BY MASS SPECTROMETRY [LARGE SCALE ANALYSIS]</scope>
    <source>
        <tissue>Spleen</tissue>
    </source>
</reference>
<gene>
    <name type="primary">Brix1</name>
    <name type="synonym">Brix</name>
    <name type="synonym">Bxdc2</name>
</gene>
<feature type="chain" id="PRO_0000120231" description="Ribosome biogenesis protein BRX1 homolog">
    <location>
        <begin position="1"/>
        <end position="353"/>
    </location>
</feature>
<feature type="domain" description="Brix" evidence="3">
    <location>
        <begin position="60"/>
        <end position="249"/>
    </location>
</feature>
<feature type="region of interest" description="Disordered" evidence="4">
    <location>
        <begin position="1"/>
        <end position="50"/>
    </location>
</feature>
<feature type="region of interest" description="Disordered" evidence="4">
    <location>
        <begin position="334"/>
        <end position="353"/>
    </location>
</feature>
<feature type="compositionally biased region" description="Basic and acidic residues" evidence="4">
    <location>
        <begin position="34"/>
        <end position="47"/>
    </location>
</feature>
<feature type="compositionally biased region" description="Basic residues" evidence="4">
    <location>
        <begin position="334"/>
        <end position="344"/>
    </location>
</feature>
<feature type="modified residue" description="Phosphoserine" evidence="2">
    <location>
        <position position="261"/>
    </location>
</feature>
<feature type="modified residue" description="N6-acetyllysine" evidence="2">
    <location>
        <position position="276"/>
    </location>
</feature>
<feature type="cross-link" description="Glycyl lysine isopeptide (Lys-Gly) (interchain with G-Cter in SUMO2)" evidence="2">
    <location>
        <position position="160"/>
    </location>
</feature>
<feature type="cross-link" description="Glycyl lysine isopeptide (Lys-Gly) (interchain with G-Cter in SUMO2)" evidence="2">
    <location>
        <position position="314"/>
    </location>
</feature>
<feature type="cross-link" description="Glycyl lysine isopeptide (Lys-Gly) (interchain with G-Cter in SUMO2)" evidence="2">
    <location>
        <position position="322"/>
    </location>
</feature>
<feature type="sequence conflict" description="In Ref. 1; BAE40264." evidence="5" ref="1">
    <original>H</original>
    <variation>N</variation>
    <location>
        <position position="195"/>
    </location>
</feature>
<feature type="sequence conflict" description="In Ref. 1; BAB22497." evidence="5" ref="1">
    <original>K</original>
    <variation>E</variation>
    <location>
        <position position="242"/>
    </location>
</feature>
<feature type="sequence conflict" description="In Ref. 1; BAB22497." evidence="5" ref="1">
    <original>H</original>
    <variation>Q</variation>
    <location>
        <position position="265"/>
    </location>
</feature>